<reference key="1">
    <citation type="journal article" date="2005" name="Nucleic Acids Res.">
        <title>Genome dynamics and diversity of Shigella species, the etiologic agents of bacillary dysentery.</title>
        <authorList>
            <person name="Yang F."/>
            <person name="Yang J."/>
            <person name="Zhang X."/>
            <person name="Chen L."/>
            <person name="Jiang Y."/>
            <person name="Yan Y."/>
            <person name="Tang X."/>
            <person name="Wang J."/>
            <person name="Xiong Z."/>
            <person name="Dong J."/>
            <person name="Xue Y."/>
            <person name="Zhu Y."/>
            <person name="Xu X."/>
            <person name="Sun L."/>
            <person name="Chen S."/>
            <person name="Nie H."/>
            <person name="Peng J."/>
            <person name="Xu J."/>
            <person name="Wang Y."/>
            <person name="Yuan Z."/>
            <person name="Wen Y."/>
            <person name="Yao Z."/>
            <person name="Shen Y."/>
            <person name="Qiang B."/>
            <person name="Hou Y."/>
            <person name="Yu J."/>
            <person name="Jin Q."/>
        </authorList>
    </citation>
    <scope>NUCLEOTIDE SEQUENCE [LARGE SCALE GENOMIC DNA]</scope>
    <source>
        <strain>Ss046</strain>
    </source>
</reference>
<organism>
    <name type="scientific">Shigella sonnei (strain Ss046)</name>
    <dbReference type="NCBI Taxonomy" id="300269"/>
    <lineage>
        <taxon>Bacteria</taxon>
        <taxon>Pseudomonadati</taxon>
        <taxon>Pseudomonadota</taxon>
        <taxon>Gammaproteobacteria</taxon>
        <taxon>Enterobacterales</taxon>
        <taxon>Enterobacteriaceae</taxon>
        <taxon>Shigella</taxon>
    </lineage>
</organism>
<protein>
    <recommendedName>
        <fullName evidence="1">Arginine N-succinyltransferase</fullName>
        <shortName evidence="1">AST</shortName>
        <ecNumber evidence="1">2.3.1.109</ecNumber>
    </recommendedName>
    <alternativeName>
        <fullName evidence="1">AOST</fullName>
    </alternativeName>
</protein>
<proteinExistence type="inferred from homology"/>
<accession>Q3Z294</accession>
<comment type="function">
    <text evidence="1">Catalyzes the transfer of succinyl-CoA to arginine to produce N(2)-succinylarginine.</text>
</comment>
<comment type="catalytic activity">
    <reaction evidence="1">
        <text>succinyl-CoA + L-arginine = N(2)-succinyl-L-arginine + CoA + H(+)</text>
        <dbReference type="Rhea" id="RHEA:15185"/>
        <dbReference type="ChEBI" id="CHEBI:15378"/>
        <dbReference type="ChEBI" id="CHEBI:32682"/>
        <dbReference type="ChEBI" id="CHEBI:57287"/>
        <dbReference type="ChEBI" id="CHEBI:57292"/>
        <dbReference type="ChEBI" id="CHEBI:58241"/>
        <dbReference type="EC" id="2.3.1.109"/>
    </reaction>
</comment>
<comment type="pathway">
    <text evidence="1">Amino-acid degradation; L-arginine degradation via AST pathway; L-glutamate and succinate from L-arginine: step 1/5.</text>
</comment>
<comment type="similarity">
    <text evidence="1">Belongs to the arginine N-succinyltransferase family.</text>
</comment>
<name>ASTA_SHISS</name>
<evidence type="ECO:0000255" key="1">
    <source>
        <dbReference type="HAMAP-Rule" id="MF_01171"/>
    </source>
</evidence>
<dbReference type="EC" id="2.3.1.109" evidence="1"/>
<dbReference type="EMBL" id="CP000038">
    <property type="protein sequence ID" value="AAZ88118.1"/>
    <property type="molecule type" value="Genomic_DNA"/>
</dbReference>
<dbReference type="RefSeq" id="WP_000989427.1">
    <property type="nucleotide sequence ID" value="NC_007384.1"/>
</dbReference>
<dbReference type="SMR" id="Q3Z294"/>
<dbReference type="KEGG" id="ssn:SSON_1410"/>
<dbReference type="HOGENOM" id="CLU_057655_0_0_6"/>
<dbReference type="UniPathway" id="UPA00185">
    <property type="reaction ID" value="UER00279"/>
</dbReference>
<dbReference type="Proteomes" id="UP000002529">
    <property type="component" value="Chromosome"/>
</dbReference>
<dbReference type="GO" id="GO:0008791">
    <property type="term" value="F:arginine N-succinyltransferase activity"/>
    <property type="evidence" value="ECO:0007669"/>
    <property type="project" value="UniProtKB-UniRule"/>
</dbReference>
<dbReference type="GO" id="GO:0019544">
    <property type="term" value="P:arginine catabolic process to glutamate"/>
    <property type="evidence" value="ECO:0007669"/>
    <property type="project" value="UniProtKB-UniRule"/>
</dbReference>
<dbReference type="GO" id="GO:0019545">
    <property type="term" value="P:arginine catabolic process to succinate"/>
    <property type="evidence" value="ECO:0007669"/>
    <property type="project" value="UniProtKB-UniRule"/>
</dbReference>
<dbReference type="Gene3D" id="2.40.40.20">
    <property type="match status" value="1"/>
</dbReference>
<dbReference type="Gene3D" id="3.40.630.30">
    <property type="match status" value="1"/>
</dbReference>
<dbReference type="HAMAP" id="MF_01171">
    <property type="entry name" value="AstA"/>
    <property type="match status" value="1"/>
</dbReference>
<dbReference type="InterPro" id="IPR016181">
    <property type="entry name" value="Acyl_CoA_acyltransferase"/>
</dbReference>
<dbReference type="InterPro" id="IPR007041">
    <property type="entry name" value="Arg_succinylTrfase_AstA/AruG"/>
</dbReference>
<dbReference type="InterPro" id="IPR017650">
    <property type="entry name" value="Arginine_N-succinylTrfase"/>
</dbReference>
<dbReference type="NCBIfam" id="TIGR03243">
    <property type="entry name" value="arg_catab_AOST"/>
    <property type="match status" value="1"/>
</dbReference>
<dbReference type="NCBIfam" id="TIGR03244">
    <property type="entry name" value="arg_catab_AstA"/>
    <property type="match status" value="1"/>
</dbReference>
<dbReference type="NCBIfam" id="NF007770">
    <property type="entry name" value="PRK10456.1"/>
    <property type="match status" value="1"/>
</dbReference>
<dbReference type="PANTHER" id="PTHR30420:SF1">
    <property type="entry name" value="ARGININE N-SUCCINYLTRANSFERASE"/>
    <property type="match status" value="1"/>
</dbReference>
<dbReference type="PANTHER" id="PTHR30420">
    <property type="entry name" value="N-SUCCINYLARGININE DIHYDROLASE"/>
    <property type="match status" value="1"/>
</dbReference>
<dbReference type="Pfam" id="PF04958">
    <property type="entry name" value="AstA"/>
    <property type="match status" value="1"/>
</dbReference>
<dbReference type="SUPFAM" id="SSF55729">
    <property type="entry name" value="Acyl-CoA N-acyltransferases (Nat)"/>
    <property type="match status" value="1"/>
</dbReference>
<feature type="chain" id="PRO_0000262333" description="Arginine N-succinyltransferase">
    <location>
        <begin position="1"/>
        <end position="344"/>
    </location>
</feature>
<feature type="active site" description="Proton donor" evidence="1">
    <location>
        <position position="229"/>
    </location>
</feature>
<feature type="binding site" evidence="1">
    <location>
        <position position="125"/>
    </location>
    <ligand>
        <name>succinyl-CoA</name>
        <dbReference type="ChEBI" id="CHEBI:57292"/>
    </ligand>
</feature>
<sequence>MMVIRPVERSDVSALMQLASKTGGGLTSLPANEATLSARIERAIKTWQGELPKSEQGYVFVLEDSETGTVAGICAIEVAVGLNDPWYNYRVGTLVHASKELNVYNALPTLFLSNDHTGSSELCTLFLDPDWRKEGNGYLLSKSRFMFMAAFRDKFNDKVVAEMRGVIDEHGYSPFWQSLGKRFFSMDFSRVDFLCGTGQKAFIAELMPKHPIYTHFLSQEAQDVIGQVHPQTAPARAVLEKEGFRYRNYIDIFDGGPTLECDIDRVRAIRKSRLVEVAEGQPAQGDFPACLVANENYHHFRVVLARTDPATERLILTAAQLDALKCHAGDRVRLVRLCAEEKTA</sequence>
<keyword id="KW-0012">Acyltransferase</keyword>
<keyword id="KW-0056">Arginine metabolism</keyword>
<keyword id="KW-1185">Reference proteome</keyword>
<keyword id="KW-0808">Transferase</keyword>
<gene>
    <name evidence="1" type="primary">astA</name>
    <name type="ordered locus">SSON_1410</name>
</gene>